<dbReference type="EMBL" id="AL365234">
    <property type="protein sequence ID" value="CAB96839.1"/>
    <property type="status" value="ALT_SEQ"/>
    <property type="molecule type" value="Genomic_DNA"/>
</dbReference>
<dbReference type="EMBL" id="CP002688">
    <property type="protein sequence ID" value="AED91602.1"/>
    <property type="molecule type" value="Genomic_DNA"/>
</dbReference>
<dbReference type="EMBL" id="BX833631">
    <property type="status" value="NOT_ANNOTATED_CDS"/>
    <property type="molecule type" value="mRNA"/>
</dbReference>
<dbReference type="PIR" id="T50793">
    <property type="entry name" value="T50793"/>
</dbReference>
<dbReference type="RefSeq" id="NP_196645.2">
    <property type="nucleotide sequence ID" value="NM_121122.4"/>
</dbReference>
<dbReference type="SMR" id="F4KIB2"/>
<dbReference type="BioGRID" id="16229">
    <property type="interactions" value="34"/>
</dbReference>
<dbReference type="FunCoup" id="F4KIB2">
    <property type="interactions" value="5161"/>
</dbReference>
<dbReference type="IntAct" id="F4KIB2">
    <property type="interactions" value="32"/>
</dbReference>
<dbReference type="STRING" id="3702.F4KIB2"/>
<dbReference type="SwissPalm" id="F4KIB2"/>
<dbReference type="PaxDb" id="3702-AT5G10840.1"/>
<dbReference type="ProteomicsDB" id="234435"/>
<dbReference type="EnsemblPlants" id="AT5G10840.1">
    <property type="protein sequence ID" value="AT5G10840.1"/>
    <property type="gene ID" value="AT5G10840"/>
</dbReference>
<dbReference type="GeneID" id="830951"/>
<dbReference type="Gramene" id="AT5G10840.1">
    <property type="protein sequence ID" value="AT5G10840.1"/>
    <property type="gene ID" value="AT5G10840"/>
</dbReference>
<dbReference type="KEGG" id="ath:AT5G10840"/>
<dbReference type="Araport" id="AT5G10840"/>
<dbReference type="TAIR" id="AT5G10840">
    <property type="gene designation" value="EMP1"/>
</dbReference>
<dbReference type="eggNOG" id="KOG1278">
    <property type="taxonomic scope" value="Eukaryota"/>
</dbReference>
<dbReference type="HOGENOM" id="CLU_010714_4_1_1"/>
<dbReference type="InParanoid" id="F4KIB2"/>
<dbReference type="OMA" id="VPFIACC"/>
<dbReference type="CD-CODE" id="4299E36E">
    <property type="entry name" value="Nucleolus"/>
</dbReference>
<dbReference type="PRO" id="PR:F4KIB2"/>
<dbReference type="Proteomes" id="UP000006548">
    <property type="component" value="Chromosome 5"/>
</dbReference>
<dbReference type="ExpressionAtlas" id="F4KIB2">
    <property type="expression patterns" value="baseline and differential"/>
</dbReference>
<dbReference type="GO" id="GO:0005768">
    <property type="term" value="C:endosome"/>
    <property type="evidence" value="ECO:0007005"/>
    <property type="project" value="TAIR"/>
</dbReference>
<dbReference type="GO" id="GO:0010008">
    <property type="term" value="C:endosome membrane"/>
    <property type="evidence" value="ECO:0007669"/>
    <property type="project" value="UniProtKB-SubCell"/>
</dbReference>
<dbReference type="GO" id="GO:0005794">
    <property type="term" value="C:Golgi apparatus"/>
    <property type="evidence" value="ECO:0007005"/>
    <property type="project" value="TAIR"/>
</dbReference>
<dbReference type="GO" id="GO:0005797">
    <property type="term" value="C:Golgi medial cisterna"/>
    <property type="evidence" value="ECO:0007005"/>
    <property type="project" value="TAIR"/>
</dbReference>
<dbReference type="GO" id="GO:0000139">
    <property type="term" value="C:Golgi membrane"/>
    <property type="evidence" value="ECO:0007669"/>
    <property type="project" value="UniProtKB-SubCell"/>
</dbReference>
<dbReference type="GO" id="GO:0009505">
    <property type="term" value="C:plant-type cell wall"/>
    <property type="evidence" value="ECO:0007005"/>
    <property type="project" value="TAIR"/>
</dbReference>
<dbReference type="GO" id="GO:0000325">
    <property type="term" value="C:plant-type vacuole"/>
    <property type="evidence" value="ECO:0007005"/>
    <property type="project" value="TAIR"/>
</dbReference>
<dbReference type="GO" id="GO:0005802">
    <property type="term" value="C:trans-Golgi network"/>
    <property type="evidence" value="ECO:0007005"/>
    <property type="project" value="TAIR"/>
</dbReference>
<dbReference type="InterPro" id="IPR004240">
    <property type="entry name" value="EMP70"/>
</dbReference>
<dbReference type="InterPro" id="IPR036259">
    <property type="entry name" value="MFS_trans_sf"/>
</dbReference>
<dbReference type="PANTHER" id="PTHR10766:SF110">
    <property type="entry name" value="TRANSMEMBRANE 9 SUPERFAMILY MEMBER 8-RELATED"/>
    <property type="match status" value="1"/>
</dbReference>
<dbReference type="PANTHER" id="PTHR10766">
    <property type="entry name" value="TRANSMEMBRANE 9 SUPERFAMILY PROTEIN"/>
    <property type="match status" value="1"/>
</dbReference>
<dbReference type="Pfam" id="PF02990">
    <property type="entry name" value="EMP70"/>
    <property type="match status" value="1"/>
</dbReference>
<dbReference type="SUPFAM" id="SSF103473">
    <property type="entry name" value="MFS general substrate transporter"/>
    <property type="match status" value="1"/>
</dbReference>
<evidence type="ECO:0000250" key="1">
    <source>
        <dbReference type="UniProtKB" id="P32802"/>
    </source>
</evidence>
<evidence type="ECO:0000250" key="2">
    <source>
        <dbReference type="UniProtKB" id="Q940G0"/>
    </source>
</evidence>
<evidence type="ECO:0000255" key="3"/>
<evidence type="ECO:0000303" key="4">
    <source>
    </source>
</evidence>
<evidence type="ECO:0000303" key="5">
    <source>
    </source>
</evidence>
<evidence type="ECO:0000305" key="6"/>
<evidence type="ECO:0000312" key="7">
    <source>
        <dbReference type="Araport" id="AT5G10840"/>
    </source>
</evidence>
<evidence type="ECO:0000312" key="8">
    <source>
        <dbReference type="EMBL" id="CAB96839.1"/>
    </source>
</evidence>
<name>TMN8_ARATH</name>
<feature type="signal peptide" evidence="3">
    <location>
        <begin position="1"/>
        <end position="33"/>
    </location>
</feature>
<feature type="chain" id="PRO_0000431265" description="Transmembrane 9 superfamily member 8" evidence="3">
    <location>
        <begin position="34"/>
        <end position="648"/>
    </location>
</feature>
<feature type="topological domain" description="Lumenal" evidence="6">
    <location>
        <begin position="34"/>
        <end position="285"/>
    </location>
</feature>
<feature type="transmembrane region" description="Helical; Name=1" evidence="3">
    <location>
        <begin position="286"/>
        <end position="306"/>
    </location>
</feature>
<feature type="topological domain" description="Cytoplasmic" evidence="6">
    <location>
        <begin position="307"/>
        <end position="355"/>
    </location>
</feature>
<feature type="transmembrane region" description="Helical; Name=2" evidence="3">
    <location>
        <begin position="356"/>
        <end position="376"/>
    </location>
</feature>
<feature type="topological domain" description="Lumenal" evidence="6">
    <location>
        <begin position="377"/>
        <end position="381"/>
    </location>
</feature>
<feature type="transmembrane region" description="Helical; Name=3" evidence="3">
    <location>
        <begin position="382"/>
        <end position="402"/>
    </location>
</feature>
<feature type="topological domain" description="Cytoplasmic" evidence="6">
    <location>
        <begin position="403"/>
        <end position="422"/>
    </location>
</feature>
<feature type="transmembrane region" description="Helical; Name=4" evidence="3">
    <location>
        <begin position="423"/>
        <end position="443"/>
    </location>
</feature>
<feature type="topological domain" description="Lumenal" evidence="6">
    <location>
        <begin position="444"/>
        <end position="455"/>
    </location>
</feature>
<feature type="transmembrane region" description="Helical; Name=5" evidence="3">
    <location>
        <begin position="456"/>
        <end position="476"/>
    </location>
</feature>
<feature type="topological domain" description="Cytoplasmic" evidence="6">
    <location>
        <begin position="477"/>
        <end position="506"/>
    </location>
</feature>
<feature type="transmembrane region" description="Helical; Name=6" evidence="3">
    <location>
        <begin position="507"/>
        <end position="527"/>
    </location>
</feature>
<feature type="topological domain" description="Lumenal" evidence="6">
    <location>
        <begin position="528"/>
        <end position="538"/>
    </location>
</feature>
<feature type="transmembrane region" description="Helical; Name=7" evidence="3">
    <location>
        <begin position="539"/>
        <end position="559"/>
    </location>
</feature>
<feature type="topological domain" description="Cytoplasmic" evidence="6">
    <location>
        <begin position="560"/>
        <end position="577"/>
    </location>
</feature>
<feature type="transmembrane region" description="Helical; Name=8" evidence="3">
    <location>
        <begin position="578"/>
        <end position="598"/>
    </location>
</feature>
<feature type="topological domain" description="Lumenal" evidence="6">
    <location>
        <begin position="599"/>
        <end position="604"/>
    </location>
</feature>
<feature type="transmembrane region" description="Helical; Name=9" evidence="3">
    <location>
        <begin position="605"/>
        <end position="625"/>
    </location>
</feature>
<feature type="topological domain" description="Cytoplasmic" evidence="6">
    <location>
        <begin position="626"/>
        <end position="648"/>
    </location>
</feature>
<feature type="short sequence motif" description="Endoplasmic reticulum export signal" evidence="2">
    <location>
        <begin position="637"/>
        <end position="642"/>
    </location>
</feature>
<feature type="short sequence motif" description="Golgi retention signal" evidence="2">
    <location>
        <begin position="646"/>
        <end position="648"/>
    </location>
</feature>
<feature type="sequence conflict" description="In Ref. 3; BX833631." ref="3">
    <original>D</original>
    <variation>E</variation>
    <location>
        <position position="570"/>
    </location>
</feature>
<feature type="sequence conflict" description="In Ref. 3; BX833631." ref="3">
    <original>A</original>
    <variation>T</variation>
    <location>
        <position position="592"/>
    </location>
</feature>
<feature type="sequence conflict" description="In Ref. 3; BX833631." ref="3">
    <original>F</original>
    <variation>L</variation>
    <location>
        <position position="612"/>
    </location>
</feature>
<feature type="sequence conflict" description="In Ref. 3; BX833631." ref="3">
    <original>F</original>
    <variation>I</variation>
    <location>
        <position position="623"/>
    </location>
</feature>
<feature type="sequence conflict" description="In Ref. 3; BX833631." ref="3">
    <original>C</original>
    <variation>Y</variation>
    <location>
        <position position="634"/>
    </location>
</feature>
<organism>
    <name type="scientific">Arabidopsis thaliana</name>
    <name type="common">Mouse-ear cress</name>
    <dbReference type="NCBI Taxonomy" id="3702"/>
    <lineage>
        <taxon>Eukaryota</taxon>
        <taxon>Viridiplantae</taxon>
        <taxon>Streptophyta</taxon>
        <taxon>Embryophyta</taxon>
        <taxon>Tracheophyta</taxon>
        <taxon>Spermatophyta</taxon>
        <taxon>Magnoliopsida</taxon>
        <taxon>eudicotyledons</taxon>
        <taxon>Gunneridae</taxon>
        <taxon>Pentapetalae</taxon>
        <taxon>rosids</taxon>
        <taxon>malvids</taxon>
        <taxon>Brassicales</taxon>
        <taxon>Brassicaceae</taxon>
        <taxon>Camelineae</taxon>
        <taxon>Arabidopsis</taxon>
    </lineage>
</organism>
<sequence>MAMEFLRSSRRILESSGCAIALIFLLFIHGAHSFYLPGVAPQDFEKGDELKVKVNKLTSIKTQLPYSYYSLPFCRPSKIVDSTENLGEVLRGDRIENAPYSFKMREAQMCNILGRVTLDAKTAKAFKEKIDDEYRVNMILDNLPLVVPIERVDQGSPSVVYQLGYHVGLKGQYEGSKEQKFFMHNHLAFTVRYHRDIQTDAARIVGFEVKPYSVKHEYEGEWSEKTRLTTCDPHTKRLVVSSATPQEVEQKKEIIFTYDVDFQESEVKWASRWDTYLLMSDNQIHWFSIVNSLMIVLFLSGMVAMIMLRTLYRDISRYNELETQEEAQEETGWKLVHGDVFRLPTNSDLLCVYVGTGVQCLGMVFVTMIFAMLGFLSPSNRGGLMTAMLLLWVFMGLFAGYASSRLYKMFKGTEWKRIAFRTAFLFPAVVSAIFFVLNALIWGQKSSGAVPFGTMFALIFLWFGISVPLVFVGGYIGFKKPAADDPVKTNKIPRQIPEQAWYMNPVFSILIGGILPFGAVFIELFFILTSIWLNQFYYIFGFLFLVFVILIVTCAEITVVLCYFQLCSEDYLWWWRSYLTSGSSALYLFLYATFYFFTKLQITKLVSAMLYFGYMLIASYAFFVLTGTIGFYACLWFTRLIYSSVKID</sequence>
<protein>
    <recommendedName>
        <fullName evidence="6">Transmembrane 9 superfamily member 8</fullName>
    </recommendedName>
    <alternativeName>
        <fullName evidence="5">Endomembrane protein 1</fullName>
    </alternativeName>
    <alternativeName>
        <fullName evidence="4">Transmembrane nine protein 8</fullName>
        <shortName evidence="4">AtTMN8</shortName>
    </alternativeName>
</protein>
<proteinExistence type="evidence at transcript level"/>
<gene>
    <name evidence="4" type="primary">TMN8</name>
    <name evidence="5" type="synonym">EMP1</name>
    <name evidence="7" type="ordered locus">At5g10840</name>
    <name evidence="8" type="ORF">T30N20_110</name>
</gene>
<keyword id="KW-0967">Endosome</keyword>
<keyword id="KW-0333">Golgi apparatus</keyword>
<keyword id="KW-0472">Membrane</keyword>
<keyword id="KW-1185">Reference proteome</keyword>
<keyword id="KW-0732">Signal</keyword>
<keyword id="KW-0812">Transmembrane</keyword>
<keyword id="KW-1133">Transmembrane helix</keyword>
<accession>F4KIB2</accession>
<accession>Q9LEV5</accession>
<reference key="1">
    <citation type="journal article" date="2000" name="Nature">
        <title>Sequence and analysis of chromosome 5 of the plant Arabidopsis thaliana.</title>
        <authorList>
            <person name="Tabata S."/>
            <person name="Kaneko T."/>
            <person name="Nakamura Y."/>
            <person name="Kotani H."/>
            <person name="Kato T."/>
            <person name="Asamizu E."/>
            <person name="Miyajima N."/>
            <person name="Sasamoto S."/>
            <person name="Kimura T."/>
            <person name="Hosouchi T."/>
            <person name="Kawashima K."/>
            <person name="Kohara M."/>
            <person name="Matsumoto M."/>
            <person name="Matsuno A."/>
            <person name="Muraki A."/>
            <person name="Nakayama S."/>
            <person name="Nakazaki N."/>
            <person name="Naruo K."/>
            <person name="Okumura S."/>
            <person name="Shinpo S."/>
            <person name="Takeuchi C."/>
            <person name="Wada T."/>
            <person name="Watanabe A."/>
            <person name="Yamada M."/>
            <person name="Yasuda M."/>
            <person name="Sato S."/>
            <person name="de la Bastide M."/>
            <person name="Huang E."/>
            <person name="Spiegel L."/>
            <person name="Gnoj L."/>
            <person name="O'Shaughnessy A."/>
            <person name="Preston R."/>
            <person name="Habermann K."/>
            <person name="Murray J."/>
            <person name="Johnson D."/>
            <person name="Rohlfing T."/>
            <person name="Nelson J."/>
            <person name="Stoneking T."/>
            <person name="Pepin K."/>
            <person name="Spieth J."/>
            <person name="Sekhon M."/>
            <person name="Armstrong J."/>
            <person name="Becker M."/>
            <person name="Belter E."/>
            <person name="Cordum H."/>
            <person name="Cordes M."/>
            <person name="Courtney L."/>
            <person name="Courtney W."/>
            <person name="Dante M."/>
            <person name="Du H."/>
            <person name="Edwards J."/>
            <person name="Fryman J."/>
            <person name="Haakensen B."/>
            <person name="Lamar E."/>
            <person name="Latreille P."/>
            <person name="Leonard S."/>
            <person name="Meyer R."/>
            <person name="Mulvaney E."/>
            <person name="Ozersky P."/>
            <person name="Riley A."/>
            <person name="Strowmatt C."/>
            <person name="Wagner-McPherson C."/>
            <person name="Wollam A."/>
            <person name="Yoakum M."/>
            <person name="Bell M."/>
            <person name="Dedhia N."/>
            <person name="Parnell L."/>
            <person name="Shah R."/>
            <person name="Rodriguez M."/>
            <person name="Hoon See L."/>
            <person name="Vil D."/>
            <person name="Baker J."/>
            <person name="Kirchoff K."/>
            <person name="Toth K."/>
            <person name="King L."/>
            <person name="Bahret A."/>
            <person name="Miller B."/>
            <person name="Marra M.A."/>
            <person name="Martienssen R."/>
            <person name="McCombie W.R."/>
            <person name="Wilson R.K."/>
            <person name="Murphy G."/>
            <person name="Bancroft I."/>
            <person name="Volckaert G."/>
            <person name="Wambutt R."/>
            <person name="Duesterhoeft A."/>
            <person name="Stiekema W."/>
            <person name="Pohl T."/>
            <person name="Entian K.-D."/>
            <person name="Terryn N."/>
            <person name="Hartley N."/>
            <person name="Bent E."/>
            <person name="Johnson S."/>
            <person name="Langham S.-A."/>
            <person name="McCullagh B."/>
            <person name="Robben J."/>
            <person name="Grymonprez B."/>
            <person name="Zimmermann W."/>
            <person name="Ramsperger U."/>
            <person name="Wedler H."/>
            <person name="Balke K."/>
            <person name="Wedler E."/>
            <person name="Peters S."/>
            <person name="van Staveren M."/>
            <person name="Dirkse W."/>
            <person name="Mooijman P."/>
            <person name="Klein Lankhorst R."/>
            <person name="Weitzenegger T."/>
            <person name="Bothe G."/>
            <person name="Rose M."/>
            <person name="Hauf J."/>
            <person name="Berneiser S."/>
            <person name="Hempel S."/>
            <person name="Feldpausch M."/>
            <person name="Lamberth S."/>
            <person name="Villarroel R."/>
            <person name="Gielen J."/>
            <person name="Ardiles W."/>
            <person name="Bents O."/>
            <person name="Lemcke K."/>
            <person name="Kolesov G."/>
            <person name="Mayer K.F.X."/>
            <person name="Rudd S."/>
            <person name="Schoof H."/>
            <person name="Schueller C."/>
            <person name="Zaccaria P."/>
            <person name="Mewes H.-W."/>
            <person name="Bevan M."/>
            <person name="Fransz P.F."/>
        </authorList>
    </citation>
    <scope>NUCLEOTIDE SEQUENCE [LARGE SCALE GENOMIC DNA]</scope>
    <source>
        <strain>cv. Columbia</strain>
    </source>
</reference>
<reference key="2">
    <citation type="journal article" date="2017" name="Plant J.">
        <title>Araport11: a complete reannotation of the Arabidopsis thaliana reference genome.</title>
        <authorList>
            <person name="Cheng C.Y."/>
            <person name="Krishnakumar V."/>
            <person name="Chan A.P."/>
            <person name="Thibaud-Nissen F."/>
            <person name="Schobel S."/>
            <person name="Town C.D."/>
        </authorList>
    </citation>
    <scope>GENOME REANNOTATION</scope>
    <source>
        <strain>cv. Columbia</strain>
    </source>
</reference>
<reference key="3">
    <citation type="journal article" date="2004" name="Genome Res.">
        <title>Whole genome sequence comparisons and 'full-length' cDNA sequences: a combined approach to evaluate and improve Arabidopsis genome annotation.</title>
        <authorList>
            <person name="Castelli V."/>
            <person name="Aury J.-M."/>
            <person name="Jaillon O."/>
            <person name="Wincker P."/>
            <person name="Clepet C."/>
            <person name="Menard M."/>
            <person name="Cruaud C."/>
            <person name="Quetier F."/>
            <person name="Scarpelli C."/>
            <person name="Schaechter V."/>
            <person name="Temple G."/>
            <person name="Caboche M."/>
            <person name="Weissenbach J."/>
            <person name="Salanoubat M."/>
        </authorList>
    </citation>
    <scope>NUCLEOTIDE SEQUENCE [LARGE SCALE MRNA] OF 545-648</scope>
    <source>
        <strain>cv. Columbia</strain>
    </source>
</reference>
<reference key="4">
    <citation type="journal article" date="2010" name="Physiol. Plantarum">
        <title>Transmembrane nine proteins in yeast and Arabidopsis affect cellular metal contents without changing vacuolar morphology.</title>
        <authorList>
            <person name="Hegelund J.N."/>
            <person name="Jahn T.P."/>
            <person name="Baekgaard L."/>
            <person name="Palmgren M.G."/>
            <person name="Schjoerring J.K."/>
        </authorList>
    </citation>
    <scope>GENE FAMILY</scope>
    <scope>NOMENCLATURE</scope>
</reference>
<reference key="5">
    <citation type="journal article" date="2012" name="Plant Cell">
        <title>The Golgi-localized Arabidopsis endomembrane protein12 contains both endoplasmic reticulum export and Golgi retention signals at its C terminus.</title>
        <authorList>
            <person name="Gao C."/>
            <person name="Yu C.K."/>
            <person name="Qu S."/>
            <person name="San M.W."/>
            <person name="Li K.Y."/>
            <person name="Lo S.W."/>
            <person name="Jiang L."/>
        </authorList>
    </citation>
    <scope>GENE FAMILY</scope>
    <scope>NOMENCLATURE</scope>
</reference>
<comment type="subcellular location">
    <subcellularLocation>
        <location evidence="1">Endosome membrane</location>
        <topology evidence="3">Multi-pass membrane protein</topology>
    </subcellularLocation>
    <subcellularLocation>
        <location evidence="2">Golgi apparatus membrane</location>
        <topology evidence="3">Multi-pass membrane protein</topology>
    </subcellularLocation>
</comment>
<comment type="domain">
    <text evidence="2">The C-terminal KXD/E motif functions as a Golgi retention signal, certainly through the binding to the COP1 coatomer.</text>
</comment>
<comment type="similarity">
    <text>Belongs to the nonaspanin (TM9SF) (TC 9.A.2) family.</text>
</comment>
<comment type="sequence caution" evidence="6">
    <conflict type="frameshift">
        <sequence resource="EMBL" id="BX833631"/>
    </conflict>
</comment>
<comment type="sequence caution" evidence="6">
    <conflict type="erroneous gene model prediction">
        <sequence resource="EMBL-CDS" id="CAB96839"/>
    </conflict>
</comment>